<gene>
    <name evidence="1" type="primary">dnaK</name>
    <name type="ordered locus">WRi_008800</name>
</gene>
<reference key="1">
    <citation type="journal article" date="2009" name="Proc. Natl. Acad. Sci. U.S.A.">
        <title>The mosaic genome structure of the Wolbachia wRi strain infecting Drosophila simulans.</title>
        <authorList>
            <person name="Klasson L."/>
            <person name="Westberg J."/>
            <person name="Sapountzis P."/>
            <person name="Naeslund K."/>
            <person name="Lutnaes Y."/>
            <person name="Darby A.C."/>
            <person name="Veneti Z."/>
            <person name="Chen L."/>
            <person name="Braig H.R."/>
            <person name="Garrett R."/>
            <person name="Bourtzis K."/>
            <person name="Andersson S.G."/>
        </authorList>
    </citation>
    <scope>NUCLEOTIDE SEQUENCE [LARGE SCALE GENOMIC DNA]</scope>
    <source>
        <strain>wRi</strain>
    </source>
</reference>
<keyword id="KW-0067">ATP-binding</keyword>
<keyword id="KW-0143">Chaperone</keyword>
<keyword id="KW-0547">Nucleotide-binding</keyword>
<keyword id="KW-0597">Phosphoprotein</keyword>
<keyword id="KW-0346">Stress response</keyword>
<sequence>MGRAIGIDLGTTNSCVAIMQGKDTKVIENKEGARTTPSIVALTSSGERLIGAPAKRQATTNASNTFFATKRLIGRQYSDPEMKNLSVPYKVFAAKSGDAWVKTTDNKEYSPSQIGAFILQNMKEAAEAYLGEEVKDAVITVPAYFNDSQRQATKDAGKIAGLNVLRIVNEPTAAALAYGLDKKHGHTIVVYDLGGGTFDVSILEIGDGVFEVKATNGDTHLGGEDFDNGVVSYLLDEFKKSNGIDLKNDPMAMQRIKEAAEKAKIELSSAMETEINLPFITADASGPKHLNMKLTRAKLESLVNDLIERTMAPCKKALEDAGLSASQIGEVVLVGGMTRMPKVIEKVKEFFGKDPHRGVNPDEVVAIGAAIQAGIIQGDVRDVLLLDVTPLSLGIETLGGVFTPLIERNTTIPTKKSQVFSTAEDNQTAVTIKVHQGERKLAVDNKLLGQFSLEGIPPAPRGRPQIEVTFDIDANGIAHVSAKDKATGKEQKIRIQSSGGLSDDEINRMVKEAEEKAQEDEKRKKFIEVKNQADSLVHSTEKSLTEYGDKVSPEDRSAIENAVNELKEVSKSDNIDDADSIQQKVTNLSQLSMKLGEAMYQASQQNSAENGFSSEGNPNDKEEKVVDSDYQDIDNKEENK</sequence>
<organism>
    <name type="scientific">Wolbachia sp. subsp. Drosophila simulans (strain wRi)</name>
    <dbReference type="NCBI Taxonomy" id="66084"/>
    <lineage>
        <taxon>Bacteria</taxon>
        <taxon>Pseudomonadati</taxon>
        <taxon>Pseudomonadota</taxon>
        <taxon>Alphaproteobacteria</taxon>
        <taxon>Rickettsiales</taxon>
        <taxon>Anaplasmataceae</taxon>
        <taxon>Wolbachieae</taxon>
        <taxon>Wolbachia</taxon>
    </lineage>
</organism>
<name>DNAK_WOLWR</name>
<dbReference type="EMBL" id="CP001391">
    <property type="protein sequence ID" value="ACN95609.1"/>
    <property type="molecule type" value="Genomic_DNA"/>
</dbReference>
<dbReference type="RefSeq" id="WP_012673300.1">
    <property type="nucleotide sequence ID" value="NZ_MKIF01000055.1"/>
</dbReference>
<dbReference type="SMR" id="C0R3W7"/>
<dbReference type="STRING" id="66084.WRi_008800"/>
<dbReference type="KEGG" id="wri:WRi_008800"/>
<dbReference type="HOGENOM" id="CLU_005965_2_1_5"/>
<dbReference type="Proteomes" id="UP000001293">
    <property type="component" value="Chromosome"/>
</dbReference>
<dbReference type="GO" id="GO:0005524">
    <property type="term" value="F:ATP binding"/>
    <property type="evidence" value="ECO:0007669"/>
    <property type="project" value="UniProtKB-UniRule"/>
</dbReference>
<dbReference type="GO" id="GO:0140662">
    <property type="term" value="F:ATP-dependent protein folding chaperone"/>
    <property type="evidence" value="ECO:0007669"/>
    <property type="project" value="InterPro"/>
</dbReference>
<dbReference type="GO" id="GO:0051082">
    <property type="term" value="F:unfolded protein binding"/>
    <property type="evidence" value="ECO:0007669"/>
    <property type="project" value="InterPro"/>
</dbReference>
<dbReference type="CDD" id="cd10234">
    <property type="entry name" value="ASKHA_NBD_HSP70_DnaK-like"/>
    <property type="match status" value="1"/>
</dbReference>
<dbReference type="FunFam" id="2.60.34.10:FF:000014">
    <property type="entry name" value="Chaperone protein DnaK HSP70"/>
    <property type="match status" value="1"/>
</dbReference>
<dbReference type="FunFam" id="3.30.420.40:FF:000020">
    <property type="entry name" value="Chaperone protein HscA homolog"/>
    <property type="match status" value="1"/>
</dbReference>
<dbReference type="FunFam" id="3.30.30.30:FF:000003">
    <property type="entry name" value="Heat shock protein 9"/>
    <property type="match status" value="1"/>
</dbReference>
<dbReference type="FunFam" id="1.20.1270.10:FF:000001">
    <property type="entry name" value="Molecular chaperone DnaK"/>
    <property type="match status" value="1"/>
</dbReference>
<dbReference type="FunFam" id="3.30.420.40:FF:000004">
    <property type="entry name" value="Molecular chaperone DnaK"/>
    <property type="match status" value="1"/>
</dbReference>
<dbReference type="FunFam" id="3.90.640.10:FF:000003">
    <property type="entry name" value="Molecular chaperone DnaK"/>
    <property type="match status" value="1"/>
</dbReference>
<dbReference type="Gene3D" id="1.20.1270.10">
    <property type="match status" value="1"/>
</dbReference>
<dbReference type="Gene3D" id="3.30.420.40">
    <property type="match status" value="2"/>
</dbReference>
<dbReference type="Gene3D" id="3.90.640.10">
    <property type="entry name" value="Actin, Chain A, domain 4"/>
    <property type="match status" value="1"/>
</dbReference>
<dbReference type="Gene3D" id="2.60.34.10">
    <property type="entry name" value="Substrate Binding Domain Of DNAk, Chain A, domain 1"/>
    <property type="match status" value="1"/>
</dbReference>
<dbReference type="HAMAP" id="MF_00332">
    <property type="entry name" value="DnaK"/>
    <property type="match status" value="1"/>
</dbReference>
<dbReference type="InterPro" id="IPR043129">
    <property type="entry name" value="ATPase_NBD"/>
</dbReference>
<dbReference type="InterPro" id="IPR012725">
    <property type="entry name" value="Chaperone_DnaK"/>
</dbReference>
<dbReference type="InterPro" id="IPR018181">
    <property type="entry name" value="Heat_shock_70_CS"/>
</dbReference>
<dbReference type="InterPro" id="IPR029048">
    <property type="entry name" value="HSP70_C_sf"/>
</dbReference>
<dbReference type="InterPro" id="IPR029047">
    <property type="entry name" value="HSP70_peptide-bd_sf"/>
</dbReference>
<dbReference type="InterPro" id="IPR013126">
    <property type="entry name" value="Hsp_70_fam"/>
</dbReference>
<dbReference type="NCBIfam" id="NF001413">
    <property type="entry name" value="PRK00290.1"/>
    <property type="match status" value="1"/>
</dbReference>
<dbReference type="NCBIfam" id="NF003520">
    <property type="entry name" value="PRK05183.1"/>
    <property type="match status" value="1"/>
</dbReference>
<dbReference type="NCBIfam" id="TIGR02350">
    <property type="entry name" value="prok_dnaK"/>
    <property type="match status" value="1"/>
</dbReference>
<dbReference type="PANTHER" id="PTHR19375">
    <property type="entry name" value="HEAT SHOCK PROTEIN 70KDA"/>
    <property type="match status" value="1"/>
</dbReference>
<dbReference type="Pfam" id="PF00012">
    <property type="entry name" value="HSP70"/>
    <property type="match status" value="1"/>
</dbReference>
<dbReference type="PRINTS" id="PR00301">
    <property type="entry name" value="HEATSHOCK70"/>
</dbReference>
<dbReference type="SUPFAM" id="SSF53067">
    <property type="entry name" value="Actin-like ATPase domain"/>
    <property type="match status" value="2"/>
</dbReference>
<dbReference type="SUPFAM" id="SSF100934">
    <property type="entry name" value="Heat shock protein 70kD (HSP70), C-terminal subdomain"/>
    <property type="match status" value="1"/>
</dbReference>
<dbReference type="SUPFAM" id="SSF100920">
    <property type="entry name" value="Heat shock protein 70kD (HSP70), peptide-binding domain"/>
    <property type="match status" value="1"/>
</dbReference>
<dbReference type="PROSITE" id="PS00297">
    <property type="entry name" value="HSP70_1"/>
    <property type="match status" value="1"/>
</dbReference>
<dbReference type="PROSITE" id="PS00329">
    <property type="entry name" value="HSP70_2"/>
    <property type="match status" value="1"/>
</dbReference>
<dbReference type="PROSITE" id="PS01036">
    <property type="entry name" value="HSP70_3"/>
    <property type="match status" value="1"/>
</dbReference>
<protein>
    <recommendedName>
        <fullName evidence="1">Chaperone protein DnaK</fullName>
    </recommendedName>
    <alternativeName>
        <fullName evidence="1">HSP70</fullName>
    </alternativeName>
    <alternativeName>
        <fullName evidence="1">Heat shock 70 kDa protein</fullName>
    </alternativeName>
    <alternativeName>
        <fullName evidence="1">Heat shock protein 70</fullName>
    </alternativeName>
</protein>
<evidence type="ECO:0000255" key="1">
    <source>
        <dbReference type="HAMAP-Rule" id="MF_00332"/>
    </source>
</evidence>
<evidence type="ECO:0000256" key="2">
    <source>
        <dbReference type="SAM" id="MobiDB-lite"/>
    </source>
</evidence>
<proteinExistence type="inferred from homology"/>
<feature type="chain" id="PRO_1000133172" description="Chaperone protein DnaK">
    <location>
        <begin position="1"/>
        <end position="640"/>
    </location>
</feature>
<feature type="region of interest" description="Disordered" evidence="2">
    <location>
        <begin position="537"/>
        <end position="556"/>
    </location>
</feature>
<feature type="region of interest" description="Disordered" evidence="2">
    <location>
        <begin position="599"/>
        <end position="640"/>
    </location>
</feature>
<feature type="compositionally biased region" description="Basic and acidic residues" evidence="2">
    <location>
        <begin position="539"/>
        <end position="556"/>
    </location>
</feature>
<feature type="compositionally biased region" description="Polar residues" evidence="2">
    <location>
        <begin position="601"/>
        <end position="617"/>
    </location>
</feature>
<feature type="compositionally biased region" description="Basic and acidic residues" evidence="2">
    <location>
        <begin position="618"/>
        <end position="640"/>
    </location>
</feature>
<feature type="modified residue" description="Phosphothreonine; by autocatalysis" evidence="1">
    <location>
        <position position="197"/>
    </location>
</feature>
<accession>C0R3W7</accession>
<comment type="function">
    <text evidence="1">Acts as a chaperone.</text>
</comment>
<comment type="induction">
    <text evidence="1">By stress conditions e.g. heat shock.</text>
</comment>
<comment type="similarity">
    <text evidence="1">Belongs to the heat shock protein 70 family.</text>
</comment>